<comment type="function">
    <text>Component of the elastin-associated microfibrils.</text>
</comment>
<comment type="subcellular location">
    <subcellularLocation>
        <location evidence="4">Cell membrane</location>
        <topology evidence="4">Single-pass type I membrane protein</topology>
    </subcellularLocation>
</comment>
<comment type="PTM">
    <text evidence="1">Glycosylated.</text>
</comment>
<sequence length="175" mass="19317">FRTEGAEKLQKAFEIAKRIPIITSAKTLELAKVTQFKTMEFARYIEELARSVPLPPLILNCRAFVEEMFEAVQVDDPDEMGERIKERPALNAQDGIFVINPEMGRSNSPGGDSDDGSLSEQGQEIAVQVSVHPQSETKSIDTDSQDSSHFSPPDDTGSTESNSNYKDGSFESCQL</sequence>
<name>MFAP3_BOVIN</name>
<protein>
    <recommendedName>
        <fullName>Microfibril-associated glycoprotein 3</fullName>
    </recommendedName>
</protein>
<keyword id="KW-1003">Cell membrane</keyword>
<keyword id="KW-0325">Glycoprotein</keyword>
<keyword id="KW-0393">Immunoglobulin domain</keyword>
<keyword id="KW-0472">Membrane</keyword>
<keyword id="KW-1185">Reference proteome</keyword>
<dbReference type="EMBL" id="L35250">
    <property type="protein sequence ID" value="AAA87355.1"/>
    <property type="molecule type" value="mRNA"/>
</dbReference>
<dbReference type="PIR" id="B56745">
    <property type="entry name" value="B56745"/>
</dbReference>
<dbReference type="STRING" id="9913.ENSBTAP00000022712"/>
<dbReference type="PaxDb" id="9913-ENSBTAP00000022712"/>
<dbReference type="eggNOG" id="ENOG502QW9J">
    <property type="taxonomic scope" value="Eukaryota"/>
</dbReference>
<dbReference type="InParanoid" id="Q28103"/>
<dbReference type="OrthoDB" id="8611351at2759"/>
<dbReference type="Proteomes" id="UP000009136">
    <property type="component" value="Unplaced"/>
</dbReference>
<dbReference type="GO" id="GO:0005886">
    <property type="term" value="C:plasma membrane"/>
    <property type="evidence" value="ECO:0007669"/>
    <property type="project" value="UniProtKB-SubCell"/>
</dbReference>
<dbReference type="PANTHER" id="PTHR14340">
    <property type="entry name" value="MICROFIBRIL-ASSOCIATED GLYCOPROTEIN 3"/>
    <property type="match status" value="1"/>
</dbReference>
<dbReference type="PANTHER" id="PTHR14340:SF4">
    <property type="entry name" value="MICROFIBRIL-ASSOCIATED GLYCOPROTEIN 3"/>
    <property type="match status" value="1"/>
</dbReference>
<proteinExistence type="evidence at transcript level"/>
<accession>Q28103</accession>
<reference key="1">
    <citation type="journal article" date="1995" name="Genomics">
        <title>Molecular cloning of the microfibrillar protein MFAP3 and assignment of the gene to human chromosome 5q32-q33.2.</title>
        <authorList>
            <person name="Abrams W.R."/>
            <person name="Ma R.-I."/>
            <person name="Kucich U."/>
            <person name="Bashir M.M."/>
            <person name="Decker S."/>
            <person name="Tsipouras P."/>
            <person name="McPherson J.D."/>
            <person name="Wasmuth J.J."/>
            <person name="Rosenbloom J."/>
        </authorList>
    </citation>
    <scope>NUCLEOTIDE SEQUENCE [MRNA]</scope>
</reference>
<feature type="chain" id="PRO_0000072682" description="Microfibril-associated glycoprotein 3">
    <location>
        <begin position="1" status="less than"/>
        <end position="175"/>
    </location>
</feature>
<feature type="topological domain" description="Cytoplasmic" evidence="2">
    <location>
        <begin position="1" status="less than"/>
        <end position="175"/>
    </location>
</feature>
<feature type="region of interest" description="Disordered" evidence="3">
    <location>
        <begin position="85"/>
        <end position="175"/>
    </location>
</feature>
<feature type="compositionally biased region" description="Polar residues" evidence="3">
    <location>
        <begin position="145"/>
        <end position="175"/>
    </location>
</feature>
<feature type="non-terminal residue">
    <location>
        <position position="1"/>
    </location>
</feature>
<gene>
    <name type="primary">MFAP3</name>
</gene>
<organism>
    <name type="scientific">Bos taurus</name>
    <name type="common">Bovine</name>
    <dbReference type="NCBI Taxonomy" id="9913"/>
    <lineage>
        <taxon>Eukaryota</taxon>
        <taxon>Metazoa</taxon>
        <taxon>Chordata</taxon>
        <taxon>Craniata</taxon>
        <taxon>Vertebrata</taxon>
        <taxon>Euteleostomi</taxon>
        <taxon>Mammalia</taxon>
        <taxon>Eutheria</taxon>
        <taxon>Laurasiatheria</taxon>
        <taxon>Artiodactyla</taxon>
        <taxon>Ruminantia</taxon>
        <taxon>Pecora</taxon>
        <taxon>Bovidae</taxon>
        <taxon>Bovinae</taxon>
        <taxon>Bos</taxon>
    </lineage>
</organism>
<evidence type="ECO:0000250" key="1"/>
<evidence type="ECO:0000255" key="2"/>
<evidence type="ECO:0000256" key="3">
    <source>
        <dbReference type="SAM" id="MobiDB-lite"/>
    </source>
</evidence>
<evidence type="ECO:0000305" key="4"/>